<protein>
    <recommendedName>
        <fullName>MADS-box transcription factor 14</fullName>
    </recommendedName>
    <alternativeName>
        <fullName>FDRMADS6</fullName>
    </alternativeName>
    <alternativeName>
        <fullName>OsMADS14</fullName>
    </alternativeName>
    <alternativeName>
        <fullName>Protein AGAMOUS-like 10</fullName>
    </alternativeName>
    <alternativeName>
        <fullName>Protein APETALA1-like B</fullName>
    </alternativeName>
    <alternativeName>
        <fullName>RMADS211</fullName>
    </alternativeName>
</protein>
<name>MAD14_ORYSI</name>
<keyword id="KW-0238">DNA-binding</keyword>
<keyword id="KW-0539">Nucleus</keyword>
<keyword id="KW-0804">Transcription</keyword>
<keyword id="KW-0805">Transcription regulation</keyword>
<feature type="chain" id="PRO_0000296349" description="MADS-box transcription factor 14">
    <location>
        <begin position="1"/>
        <end position="246"/>
    </location>
</feature>
<feature type="domain" description="MADS-box" evidence="1">
    <location>
        <begin position="1"/>
        <end position="61"/>
    </location>
</feature>
<feature type="domain" description="K-box" evidence="2">
    <location>
        <begin position="88"/>
        <end position="178"/>
    </location>
</feature>
<feature type="region of interest" description="Disordered" evidence="3">
    <location>
        <begin position="180"/>
        <end position="199"/>
    </location>
</feature>
<organism>
    <name type="scientific">Oryza sativa subsp. indica</name>
    <name type="common">Rice</name>
    <dbReference type="NCBI Taxonomy" id="39946"/>
    <lineage>
        <taxon>Eukaryota</taxon>
        <taxon>Viridiplantae</taxon>
        <taxon>Streptophyta</taxon>
        <taxon>Embryophyta</taxon>
        <taxon>Tracheophyta</taxon>
        <taxon>Spermatophyta</taxon>
        <taxon>Magnoliopsida</taxon>
        <taxon>Liliopsida</taxon>
        <taxon>Poales</taxon>
        <taxon>Poaceae</taxon>
        <taxon>BOP clade</taxon>
        <taxon>Oryzoideae</taxon>
        <taxon>Oryzeae</taxon>
        <taxon>Oryzinae</taxon>
        <taxon>Oryza</taxon>
        <taxon>Oryza sativa</taxon>
    </lineage>
</organism>
<dbReference type="EMBL" id="AF139664">
    <property type="protein sequence ID" value="AAF66997.2"/>
    <property type="molecule type" value="mRNA"/>
</dbReference>
<dbReference type="SMR" id="P0C5B1"/>
<dbReference type="GO" id="GO:0005634">
    <property type="term" value="C:nucleus"/>
    <property type="evidence" value="ECO:0007669"/>
    <property type="project" value="UniProtKB-SubCell"/>
</dbReference>
<dbReference type="GO" id="GO:0003700">
    <property type="term" value="F:DNA-binding transcription factor activity"/>
    <property type="evidence" value="ECO:0007669"/>
    <property type="project" value="InterPro"/>
</dbReference>
<dbReference type="GO" id="GO:0046983">
    <property type="term" value="F:protein dimerization activity"/>
    <property type="evidence" value="ECO:0007669"/>
    <property type="project" value="InterPro"/>
</dbReference>
<dbReference type="GO" id="GO:0000977">
    <property type="term" value="F:RNA polymerase II transcription regulatory region sequence-specific DNA binding"/>
    <property type="evidence" value="ECO:0007669"/>
    <property type="project" value="InterPro"/>
</dbReference>
<dbReference type="GO" id="GO:0045944">
    <property type="term" value="P:positive regulation of transcription by RNA polymerase II"/>
    <property type="evidence" value="ECO:0007669"/>
    <property type="project" value="InterPro"/>
</dbReference>
<dbReference type="CDD" id="cd00265">
    <property type="entry name" value="MADS_MEF2_like"/>
    <property type="match status" value="1"/>
</dbReference>
<dbReference type="FunFam" id="3.40.1810.10:FF:000003">
    <property type="entry name" value="MADS-box transcription factor MADS-MC"/>
    <property type="match status" value="1"/>
</dbReference>
<dbReference type="Gene3D" id="3.40.1810.10">
    <property type="entry name" value="Transcription factor, MADS-box"/>
    <property type="match status" value="1"/>
</dbReference>
<dbReference type="InterPro" id="IPR050142">
    <property type="entry name" value="MADS-box/MEF2_TF"/>
</dbReference>
<dbReference type="InterPro" id="IPR033896">
    <property type="entry name" value="MEF2-like_N"/>
</dbReference>
<dbReference type="InterPro" id="IPR002487">
    <property type="entry name" value="TF_Kbox"/>
</dbReference>
<dbReference type="InterPro" id="IPR002100">
    <property type="entry name" value="TF_MADSbox"/>
</dbReference>
<dbReference type="InterPro" id="IPR036879">
    <property type="entry name" value="TF_MADSbox_sf"/>
</dbReference>
<dbReference type="PANTHER" id="PTHR48019">
    <property type="entry name" value="SERUM RESPONSE FACTOR HOMOLOG"/>
    <property type="match status" value="1"/>
</dbReference>
<dbReference type="Pfam" id="PF01486">
    <property type="entry name" value="K-box"/>
    <property type="match status" value="1"/>
</dbReference>
<dbReference type="Pfam" id="PF00319">
    <property type="entry name" value="SRF-TF"/>
    <property type="match status" value="1"/>
</dbReference>
<dbReference type="PRINTS" id="PR00404">
    <property type="entry name" value="MADSDOMAIN"/>
</dbReference>
<dbReference type="SMART" id="SM00432">
    <property type="entry name" value="MADS"/>
    <property type="match status" value="1"/>
</dbReference>
<dbReference type="SUPFAM" id="SSF55455">
    <property type="entry name" value="SRF-like"/>
    <property type="match status" value="1"/>
</dbReference>
<dbReference type="PROSITE" id="PS51297">
    <property type="entry name" value="K_BOX"/>
    <property type="match status" value="1"/>
</dbReference>
<dbReference type="PROSITE" id="PS00350">
    <property type="entry name" value="MADS_BOX_1"/>
    <property type="match status" value="1"/>
</dbReference>
<dbReference type="PROSITE" id="PS50066">
    <property type="entry name" value="MADS_BOX_2"/>
    <property type="match status" value="1"/>
</dbReference>
<accession>P0C5B1</accession>
<accession>Q7Y023</accession>
<accession>Q8LLN3</accession>
<accession>Q9M7C6</accession>
<accession>Q9MAY7</accession>
<accession>Q9SEX0</accession>
<proteinExistence type="evidence at transcript level"/>
<evidence type="ECO:0000255" key="1">
    <source>
        <dbReference type="PROSITE-ProRule" id="PRU00251"/>
    </source>
</evidence>
<evidence type="ECO:0000255" key="2">
    <source>
        <dbReference type="PROSITE-ProRule" id="PRU00629"/>
    </source>
</evidence>
<evidence type="ECO:0000256" key="3">
    <source>
        <dbReference type="SAM" id="MobiDB-lite"/>
    </source>
</evidence>
<evidence type="ECO:0000269" key="4">
    <source>
    </source>
</evidence>
<evidence type="ECO:0000305" key="5"/>
<gene>
    <name type="primary">MADS14</name>
    <name type="synonym">AGL10</name>
    <name type="synonym">RAP1B</name>
</gene>
<sequence>MGRGKVQLKRIENTINRQVTFSKRRSGLLKKANEISVLCDAEVALIIFSTKGKLYKYATDSCMDKILERYERYSYAEKVLISAESDTQGNWCHEYRKLKAKVETIQKCQKHLMGEDLESLNLKELQQLEQQLENSLKHIRSRKSQLMLESINELQRKEKSLQEENKVLQKELVEKQKVQKQQVQWDQTQPQTSSSSSSFMMREALPTTNISNYPAAAGERIEDVAAGQPQHVRIGLPPWMLSHING</sequence>
<reference key="1">
    <citation type="journal article" date="2000" name="Plant Sci.">
        <title>Characterization and transcriptional profiles of two rice MADS-box genes.</title>
        <authorList>
            <person name="Jia H.-W."/>
            <person name="Chen R."/>
            <person name="Cong B."/>
            <person name="Cao K.-M."/>
            <person name="Sun C.-R."/>
            <person name="Luo D."/>
        </authorList>
    </citation>
    <scope>NUCLEOTIDE SEQUENCE [MRNA]</scope>
    <scope>TISSUE SPECIFICITY</scope>
    <scope>DEVELOPMENTAL STAGE</scope>
    <source>
        <strain>cv. Guang-Lu-Ai No.4</strain>
    </source>
</reference>
<comment type="function">
    <text>Probable transcription factor.</text>
</comment>
<comment type="subcellular location">
    <subcellularLocation>
        <location evidence="5">Nucleus</location>
    </subcellularLocation>
</comment>
<comment type="tissue specificity">
    <text evidence="4">Highly expressed in sterile lemmas, at intermediate levels in stamens, and weakly in lemmas, paleas and carpels.</text>
</comment>
<comment type="developmental stage">
    <text evidence="4">Expressed at early stage of flower development in the spikelet (rice flower) apical meristem and later in developing stamens, pistil primordia and differentiated anthers.</text>
</comment>